<name>DEF_ECOUT</name>
<comment type="function">
    <text evidence="1">Removes the formyl group from the N-terminal Met of newly synthesized proteins. Requires at least a dipeptide for an efficient rate of reaction. N-terminal L-methionine is a prerequisite for activity but the enzyme has broad specificity at other positions.</text>
</comment>
<comment type="catalytic activity">
    <reaction evidence="1">
        <text>N-terminal N-formyl-L-methionyl-[peptide] + H2O = N-terminal L-methionyl-[peptide] + formate</text>
        <dbReference type="Rhea" id="RHEA:24420"/>
        <dbReference type="Rhea" id="RHEA-COMP:10639"/>
        <dbReference type="Rhea" id="RHEA-COMP:10640"/>
        <dbReference type="ChEBI" id="CHEBI:15377"/>
        <dbReference type="ChEBI" id="CHEBI:15740"/>
        <dbReference type="ChEBI" id="CHEBI:49298"/>
        <dbReference type="ChEBI" id="CHEBI:64731"/>
        <dbReference type="EC" id="3.5.1.88"/>
    </reaction>
</comment>
<comment type="cofactor">
    <cofactor evidence="1">
        <name>Fe(2+)</name>
        <dbReference type="ChEBI" id="CHEBI:29033"/>
    </cofactor>
    <text evidence="1">Binds 1 Fe(2+) ion.</text>
</comment>
<comment type="similarity">
    <text evidence="1">Belongs to the polypeptide deformylase family.</text>
</comment>
<proteinExistence type="inferred from homology"/>
<evidence type="ECO:0000255" key="1">
    <source>
        <dbReference type="HAMAP-Rule" id="MF_00163"/>
    </source>
</evidence>
<protein>
    <recommendedName>
        <fullName evidence="1">Peptide deformylase</fullName>
        <shortName evidence="1">PDF</shortName>
        <ecNumber evidence="1">3.5.1.88</ecNumber>
    </recommendedName>
    <alternativeName>
        <fullName evidence="1">Polypeptide deformylase</fullName>
    </alternativeName>
</protein>
<organism>
    <name type="scientific">Escherichia coli (strain UTI89 / UPEC)</name>
    <dbReference type="NCBI Taxonomy" id="364106"/>
    <lineage>
        <taxon>Bacteria</taxon>
        <taxon>Pseudomonadati</taxon>
        <taxon>Pseudomonadota</taxon>
        <taxon>Gammaproteobacteria</taxon>
        <taxon>Enterobacterales</taxon>
        <taxon>Enterobacteriaceae</taxon>
        <taxon>Escherichia</taxon>
    </lineage>
</organism>
<keyword id="KW-0378">Hydrolase</keyword>
<keyword id="KW-0408">Iron</keyword>
<keyword id="KW-0479">Metal-binding</keyword>
<keyword id="KW-0648">Protein biosynthesis</keyword>
<gene>
    <name evidence="1" type="primary">def</name>
    <name type="ordered locus">UTI89_C3731</name>
</gene>
<sequence>MSVLQVLHIPDERLRKVAKPVEEVNAEIQRIVDDMFETMYAEEGIGLAATQVDIHQRIIVIDVSENRDERLVLINPELLEKSGETGIEEGCLSIPEQRALVPRAEKVKIRALDRDGKPFELEADGLLAICIQHEMDHLVGKLFMDYLSPLKQQRIRQKVEKLDRLKARA</sequence>
<feature type="chain" id="PRO_0000301030" description="Peptide deformylase">
    <location>
        <begin position="1"/>
        <end position="169"/>
    </location>
</feature>
<feature type="active site" evidence="1">
    <location>
        <position position="134"/>
    </location>
</feature>
<feature type="binding site" evidence="1">
    <location>
        <position position="91"/>
    </location>
    <ligand>
        <name>Fe cation</name>
        <dbReference type="ChEBI" id="CHEBI:24875"/>
    </ligand>
</feature>
<feature type="binding site" evidence="1">
    <location>
        <position position="133"/>
    </location>
    <ligand>
        <name>Fe cation</name>
        <dbReference type="ChEBI" id="CHEBI:24875"/>
    </ligand>
</feature>
<feature type="binding site" evidence="1">
    <location>
        <position position="137"/>
    </location>
    <ligand>
        <name>Fe cation</name>
        <dbReference type="ChEBI" id="CHEBI:24875"/>
    </ligand>
</feature>
<accession>Q1R646</accession>
<dbReference type="EC" id="3.5.1.88" evidence="1"/>
<dbReference type="EMBL" id="CP000243">
    <property type="protein sequence ID" value="ABE09168.1"/>
    <property type="molecule type" value="Genomic_DNA"/>
</dbReference>
<dbReference type="RefSeq" id="WP_000114984.1">
    <property type="nucleotide sequence ID" value="NZ_CP064825.1"/>
</dbReference>
<dbReference type="SMR" id="Q1R646"/>
<dbReference type="GeneID" id="89518132"/>
<dbReference type="KEGG" id="eci:UTI89_C3731"/>
<dbReference type="HOGENOM" id="CLU_061901_2_1_6"/>
<dbReference type="Proteomes" id="UP000001952">
    <property type="component" value="Chromosome"/>
</dbReference>
<dbReference type="GO" id="GO:0046872">
    <property type="term" value="F:metal ion binding"/>
    <property type="evidence" value="ECO:0007669"/>
    <property type="project" value="UniProtKB-KW"/>
</dbReference>
<dbReference type="GO" id="GO:0042586">
    <property type="term" value="F:peptide deformylase activity"/>
    <property type="evidence" value="ECO:0007669"/>
    <property type="project" value="UniProtKB-UniRule"/>
</dbReference>
<dbReference type="GO" id="GO:0043686">
    <property type="term" value="P:co-translational protein modification"/>
    <property type="evidence" value="ECO:0007669"/>
    <property type="project" value="TreeGrafter"/>
</dbReference>
<dbReference type="GO" id="GO:0006412">
    <property type="term" value="P:translation"/>
    <property type="evidence" value="ECO:0007669"/>
    <property type="project" value="UniProtKB-UniRule"/>
</dbReference>
<dbReference type="CDD" id="cd00487">
    <property type="entry name" value="Pep_deformylase"/>
    <property type="match status" value="1"/>
</dbReference>
<dbReference type="FunFam" id="3.90.45.10:FF:000001">
    <property type="entry name" value="Peptide deformylase"/>
    <property type="match status" value="1"/>
</dbReference>
<dbReference type="Gene3D" id="3.90.45.10">
    <property type="entry name" value="Peptide deformylase"/>
    <property type="match status" value="1"/>
</dbReference>
<dbReference type="HAMAP" id="MF_00163">
    <property type="entry name" value="Pep_deformylase"/>
    <property type="match status" value="1"/>
</dbReference>
<dbReference type="InterPro" id="IPR023635">
    <property type="entry name" value="Peptide_deformylase"/>
</dbReference>
<dbReference type="InterPro" id="IPR036821">
    <property type="entry name" value="Peptide_deformylase_sf"/>
</dbReference>
<dbReference type="NCBIfam" id="TIGR00079">
    <property type="entry name" value="pept_deformyl"/>
    <property type="match status" value="1"/>
</dbReference>
<dbReference type="NCBIfam" id="NF001159">
    <property type="entry name" value="PRK00150.1-3"/>
    <property type="match status" value="1"/>
</dbReference>
<dbReference type="PANTHER" id="PTHR10458">
    <property type="entry name" value="PEPTIDE DEFORMYLASE"/>
    <property type="match status" value="1"/>
</dbReference>
<dbReference type="PANTHER" id="PTHR10458:SF21">
    <property type="entry name" value="PEPTIDE DEFORMYLASE"/>
    <property type="match status" value="1"/>
</dbReference>
<dbReference type="Pfam" id="PF01327">
    <property type="entry name" value="Pep_deformylase"/>
    <property type="match status" value="1"/>
</dbReference>
<dbReference type="PIRSF" id="PIRSF004749">
    <property type="entry name" value="Pep_def"/>
    <property type="match status" value="1"/>
</dbReference>
<dbReference type="PRINTS" id="PR01576">
    <property type="entry name" value="PDEFORMYLASE"/>
</dbReference>
<dbReference type="SUPFAM" id="SSF56420">
    <property type="entry name" value="Peptide deformylase"/>
    <property type="match status" value="1"/>
</dbReference>
<reference key="1">
    <citation type="journal article" date="2006" name="Proc. Natl. Acad. Sci. U.S.A.">
        <title>Identification of genes subject to positive selection in uropathogenic strains of Escherichia coli: a comparative genomics approach.</title>
        <authorList>
            <person name="Chen S.L."/>
            <person name="Hung C.-S."/>
            <person name="Xu J."/>
            <person name="Reigstad C.S."/>
            <person name="Magrini V."/>
            <person name="Sabo A."/>
            <person name="Blasiar D."/>
            <person name="Bieri T."/>
            <person name="Meyer R.R."/>
            <person name="Ozersky P."/>
            <person name="Armstrong J.R."/>
            <person name="Fulton R.S."/>
            <person name="Latreille J.P."/>
            <person name="Spieth J."/>
            <person name="Hooton T.M."/>
            <person name="Mardis E.R."/>
            <person name="Hultgren S.J."/>
            <person name="Gordon J.I."/>
        </authorList>
    </citation>
    <scope>NUCLEOTIDE SEQUENCE [LARGE SCALE GENOMIC DNA]</scope>
    <source>
        <strain>UTI89 / UPEC</strain>
    </source>
</reference>